<comment type="function">
    <text evidence="1">Arginine methyltransferase that can both catalyze the formation of omega-N monomethylarginine (MMA) and asymmetrical dimethylarginine (aDMA).</text>
</comment>
<comment type="similarity">
    <text evidence="2">Belongs to the class I-like SAM-binding methyltransferase superfamily. Protein arginine N-methyltransferase family. PRMT6 subfamily.</text>
</comment>
<accession>A2Z8S0</accession>
<dbReference type="EC" id="2.1.1.-"/>
<dbReference type="EMBL" id="CM000135">
    <property type="status" value="NOT_ANNOTATED_CDS"/>
    <property type="molecule type" value="Genomic_DNA"/>
</dbReference>
<dbReference type="SMR" id="A2Z8S0"/>
<dbReference type="STRING" id="39946.A2Z8S0"/>
<dbReference type="EnsemblPlants" id="OsGoSa_10g0015350.01">
    <property type="protein sequence ID" value="OsGoSa_10g0015350.01"/>
    <property type="gene ID" value="OsGoSa_10g0015350"/>
</dbReference>
<dbReference type="EnsemblPlants" id="OsIR64_10g0015290.01">
    <property type="protein sequence ID" value="OsIR64_10g0015290.01"/>
    <property type="gene ID" value="OsIR64_10g0015290"/>
</dbReference>
<dbReference type="EnsemblPlants" id="OsKYG_10g0014950.01">
    <property type="protein sequence ID" value="OsKYG_10g0014950.01"/>
    <property type="gene ID" value="OsKYG_10g0014950"/>
</dbReference>
<dbReference type="EnsemblPlants" id="OsLaMu_10g0015590.01">
    <property type="protein sequence ID" value="OsLaMu_10g0015590.01"/>
    <property type="gene ID" value="OsLaMu_10g0015590"/>
</dbReference>
<dbReference type="EnsemblPlants" id="OsLiXu_10g0015060.01">
    <property type="protein sequence ID" value="OsLiXu_10g0015060.01"/>
    <property type="gene ID" value="OsLiXu_10g0015060"/>
</dbReference>
<dbReference type="EnsemblPlants" id="OsMH63_10G015160_05">
    <property type="protein sequence ID" value="OsMH63_10G015160_05"/>
    <property type="gene ID" value="OsMH63_10G015160"/>
</dbReference>
<dbReference type="EnsemblPlants" id="OsPr106_10g0015350.01">
    <property type="protein sequence ID" value="OsPr106_10g0015350.01"/>
    <property type="gene ID" value="OsPr106_10g0015350"/>
</dbReference>
<dbReference type="EnsemblPlants" id="OsZS97_10G015370_01">
    <property type="protein sequence ID" value="OsZS97_10G015370_01"/>
    <property type="gene ID" value="OsZS97_10G015370"/>
</dbReference>
<dbReference type="Gramene" id="OsGoSa_10g0015350.01">
    <property type="protein sequence ID" value="OsGoSa_10g0015350.01"/>
    <property type="gene ID" value="OsGoSa_10g0015350"/>
</dbReference>
<dbReference type="Gramene" id="OsIR64_10g0015290.01">
    <property type="protein sequence ID" value="OsIR64_10g0015290.01"/>
    <property type="gene ID" value="OsIR64_10g0015290"/>
</dbReference>
<dbReference type="Gramene" id="OsKYG_10g0014950.01">
    <property type="protein sequence ID" value="OsKYG_10g0014950.01"/>
    <property type="gene ID" value="OsKYG_10g0014950"/>
</dbReference>
<dbReference type="Gramene" id="OsLaMu_10g0015590.01">
    <property type="protein sequence ID" value="OsLaMu_10g0015590.01"/>
    <property type="gene ID" value="OsLaMu_10g0015590"/>
</dbReference>
<dbReference type="Gramene" id="OsLiXu_10g0015060.01">
    <property type="protein sequence ID" value="OsLiXu_10g0015060.01"/>
    <property type="gene ID" value="OsLiXu_10g0015060"/>
</dbReference>
<dbReference type="Gramene" id="OsMH63_10G015160_05">
    <property type="protein sequence ID" value="OsMH63_10G015160_05"/>
    <property type="gene ID" value="OsMH63_10G015160"/>
</dbReference>
<dbReference type="Gramene" id="OsPr106_10g0015350.01">
    <property type="protein sequence ID" value="OsPr106_10g0015350.01"/>
    <property type="gene ID" value="OsPr106_10g0015350"/>
</dbReference>
<dbReference type="Gramene" id="OsZS97_10G015370_01">
    <property type="protein sequence ID" value="OsZS97_10G015370_01"/>
    <property type="gene ID" value="OsZS97_10G015370"/>
</dbReference>
<dbReference type="OrthoDB" id="7848332at2759"/>
<dbReference type="Proteomes" id="UP000007015">
    <property type="component" value="Chromosome 10"/>
</dbReference>
<dbReference type="GO" id="GO:0042054">
    <property type="term" value="F:histone methyltransferase activity"/>
    <property type="evidence" value="ECO:0007669"/>
    <property type="project" value="TreeGrafter"/>
</dbReference>
<dbReference type="GO" id="GO:0016274">
    <property type="term" value="F:protein-arginine N-methyltransferase activity"/>
    <property type="evidence" value="ECO:0007669"/>
    <property type="project" value="InterPro"/>
</dbReference>
<dbReference type="GO" id="GO:0032259">
    <property type="term" value="P:methylation"/>
    <property type="evidence" value="ECO:0007669"/>
    <property type="project" value="UniProtKB-KW"/>
</dbReference>
<dbReference type="CDD" id="cd02440">
    <property type="entry name" value="AdoMet_MTases"/>
    <property type="match status" value="1"/>
</dbReference>
<dbReference type="FunFam" id="2.70.160.11:FF:000008">
    <property type="entry name" value="Protein arginine N-methyltransferase 6"/>
    <property type="match status" value="1"/>
</dbReference>
<dbReference type="FunFam" id="3.40.50.150:FF:000016">
    <property type="entry name" value="Protein arginine N-methyltransferase 6"/>
    <property type="match status" value="1"/>
</dbReference>
<dbReference type="Gene3D" id="2.70.160.11">
    <property type="entry name" value="Hnrnp arginine n-methyltransferase1"/>
    <property type="match status" value="1"/>
</dbReference>
<dbReference type="Gene3D" id="3.40.50.150">
    <property type="entry name" value="Vaccinia Virus protein VP39"/>
    <property type="match status" value="1"/>
</dbReference>
<dbReference type="InterPro" id="IPR025799">
    <property type="entry name" value="Arg_MeTrfase"/>
</dbReference>
<dbReference type="InterPro" id="IPR055135">
    <property type="entry name" value="PRMT_dom"/>
</dbReference>
<dbReference type="InterPro" id="IPR029063">
    <property type="entry name" value="SAM-dependent_MTases_sf"/>
</dbReference>
<dbReference type="PANTHER" id="PTHR11006">
    <property type="entry name" value="PROTEIN ARGININE N-METHYLTRANSFERASE"/>
    <property type="match status" value="1"/>
</dbReference>
<dbReference type="PANTHER" id="PTHR11006:SF73">
    <property type="entry name" value="PROTEIN ARGININE N-METHYLTRANSFERASE 6"/>
    <property type="match status" value="1"/>
</dbReference>
<dbReference type="Pfam" id="PF06325">
    <property type="entry name" value="PrmA"/>
    <property type="match status" value="1"/>
</dbReference>
<dbReference type="Pfam" id="PF22528">
    <property type="entry name" value="PRMT_C"/>
    <property type="match status" value="2"/>
</dbReference>
<dbReference type="SUPFAM" id="SSF53335">
    <property type="entry name" value="S-adenosyl-L-methionine-dependent methyltransferases"/>
    <property type="match status" value="1"/>
</dbReference>
<dbReference type="PROSITE" id="PS51678">
    <property type="entry name" value="SAM_MT_PRMT"/>
    <property type="match status" value="1"/>
</dbReference>
<organism>
    <name type="scientific">Oryza sativa subsp. indica</name>
    <name type="common">Rice</name>
    <dbReference type="NCBI Taxonomy" id="39946"/>
    <lineage>
        <taxon>Eukaryota</taxon>
        <taxon>Viridiplantae</taxon>
        <taxon>Streptophyta</taxon>
        <taxon>Embryophyta</taxon>
        <taxon>Tracheophyta</taxon>
        <taxon>Spermatophyta</taxon>
        <taxon>Magnoliopsida</taxon>
        <taxon>Liliopsida</taxon>
        <taxon>Poales</taxon>
        <taxon>Poaceae</taxon>
        <taxon>BOP clade</taxon>
        <taxon>Oryzoideae</taxon>
        <taxon>Oryzeae</taxon>
        <taxon>Oryzinae</taxon>
        <taxon>Oryza</taxon>
        <taxon>Oryza sativa</taxon>
    </lineage>
</organism>
<evidence type="ECO:0000250" key="1"/>
<evidence type="ECO:0000255" key="2">
    <source>
        <dbReference type="PROSITE-ProRule" id="PRU01015"/>
    </source>
</evidence>
<evidence type="ECO:0000256" key="3">
    <source>
        <dbReference type="SAM" id="MobiDB-lite"/>
    </source>
</evidence>
<reference key="1">
    <citation type="journal article" date="2005" name="PLoS Biol.">
        <title>The genomes of Oryza sativa: a history of duplications.</title>
        <authorList>
            <person name="Yu J."/>
            <person name="Wang J."/>
            <person name="Lin W."/>
            <person name="Li S."/>
            <person name="Li H."/>
            <person name="Zhou J."/>
            <person name="Ni P."/>
            <person name="Dong W."/>
            <person name="Hu S."/>
            <person name="Zeng C."/>
            <person name="Zhang J."/>
            <person name="Zhang Y."/>
            <person name="Li R."/>
            <person name="Xu Z."/>
            <person name="Li S."/>
            <person name="Li X."/>
            <person name="Zheng H."/>
            <person name="Cong L."/>
            <person name="Lin L."/>
            <person name="Yin J."/>
            <person name="Geng J."/>
            <person name="Li G."/>
            <person name="Shi J."/>
            <person name="Liu J."/>
            <person name="Lv H."/>
            <person name="Li J."/>
            <person name="Wang J."/>
            <person name="Deng Y."/>
            <person name="Ran L."/>
            <person name="Shi X."/>
            <person name="Wang X."/>
            <person name="Wu Q."/>
            <person name="Li C."/>
            <person name="Ren X."/>
            <person name="Wang J."/>
            <person name="Wang X."/>
            <person name="Li D."/>
            <person name="Liu D."/>
            <person name="Zhang X."/>
            <person name="Ji Z."/>
            <person name="Zhao W."/>
            <person name="Sun Y."/>
            <person name="Zhang Z."/>
            <person name="Bao J."/>
            <person name="Han Y."/>
            <person name="Dong L."/>
            <person name="Ji J."/>
            <person name="Chen P."/>
            <person name="Wu S."/>
            <person name="Liu J."/>
            <person name="Xiao Y."/>
            <person name="Bu D."/>
            <person name="Tan J."/>
            <person name="Yang L."/>
            <person name="Ye C."/>
            <person name="Zhang J."/>
            <person name="Xu J."/>
            <person name="Zhou Y."/>
            <person name="Yu Y."/>
            <person name="Zhang B."/>
            <person name="Zhuang S."/>
            <person name="Wei H."/>
            <person name="Liu B."/>
            <person name="Lei M."/>
            <person name="Yu H."/>
            <person name="Li Y."/>
            <person name="Xu H."/>
            <person name="Wei S."/>
            <person name="He X."/>
            <person name="Fang L."/>
            <person name="Zhang Z."/>
            <person name="Zhang Y."/>
            <person name="Huang X."/>
            <person name="Su Z."/>
            <person name="Tong W."/>
            <person name="Li J."/>
            <person name="Tong Z."/>
            <person name="Li S."/>
            <person name="Ye J."/>
            <person name="Wang L."/>
            <person name="Fang L."/>
            <person name="Lei T."/>
            <person name="Chen C.-S."/>
            <person name="Chen H.-C."/>
            <person name="Xu Z."/>
            <person name="Li H."/>
            <person name="Huang H."/>
            <person name="Zhang F."/>
            <person name="Xu H."/>
            <person name="Li N."/>
            <person name="Zhao C."/>
            <person name="Li S."/>
            <person name="Dong L."/>
            <person name="Huang Y."/>
            <person name="Li L."/>
            <person name="Xi Y."/>
            <person name="Qi Q."/>
            <person name="Li W."/>
            <person name="Zhang B."/>
            <person name="Hu W."/>
            <person name="Zhang Y."/>
            <person name="Tian X."/>
            <person name="Jiao Y."/>
            <person name="Liang X."/>
            <person name="Jin J."/>
            <person name="Gao L."/>
            <person name="Zheng W."/>
            <person name="Hao B."/>
            <person name="Liu S.-M."/>
            <person name="Wang W."/>
            <person name="Yuan L."/>
            <person name="Cao M."/>
            <person name="McDermott J."/>
            <person name="Samudrala R."/>
            <person name="Wang J."/>
            <person name="Wong G.K.-S."/>
            <person name="Yang H."/>
        </authorList>
    </citation>
    <scope>NUCLEOTIDE SEQUENCE [LARGE SCALE GENOMIC DNA]</scope>
    <source>
        <strain>cv. 93-11</strain>
    </source>
</reference>
<gene>
    <name type="primary">PRMT6.2</name>
    <name type="ORF">OsI_032963</name>
</gene>
<feature type="chain" id="PRO_0000293999" description="Probable protein arginine N-methyltransferase 6.2">
    <location>
        <begin position="1"/>
        <end position="395"/>
    </location>
</feature>
<feature type="domain" description="SAM-dependent MTase PRMT-type" evidence="2">
    <location>
        <begin position="45"/>
        <end position="390"/>
    </location>
</feature>
<feature type="region of interest" description="Disordered" evidence="3">
    <location>
        <begin position="1"/>
        <end position="37"/>
    </location>
</feature>
<feature type="region of interest" description="Disordered" evidence="3">
    <location>
        <begin position="300"/>
        <end position="324"/>
    </location>
</feature>
<feature type="compositionally biased region" description="Gly residues" evidence="3">
    <location>
        <begin position="1"/>
        <end position="11"/>
    </location>
</feature>
<feature type="compositionally biased region" description="Polar residues" evidence="3">
    <location>
        <begin position="302"/>
        <end position="317"/>
    </location>
</feature>
<feature type="active site" evidence="1">
    <location>
        <position position="156"/>
    </location>
</feature>
<feature type="active site" evidence="1">
    <location>
        <position position="165"/>
    </location>
</feature>
<feature type="binding site" evidence="1">
    <location>
        <position position="58"/>
    </location>
    <ligand>
        <name>S-adenosyl-L-methionine</name>
        <dbReference type="ChEBI" id="CHEBI:59789"/>
    </ligand>
</feature>
<feature type="binding site" evidence="1">
    <location>
        <position position="67"/>
    </location>
    <ligand>
        <name>S-adenosyl-L-methionine</name>
        <dbReference type="ChEBI" id="CHEBI:59789"/>
    </ligand>
</feature>
<feature type="binding site" evidence="1">
    <location>
        <position position="91"/>
    </location>
    <ligand>
        <name>S-adenosyl-L-methionine</name>
        <dbReference type="ChEBI" id="CHEBI:59789"/>
    </ligand>
</feature>
<feature type="binding site" evidence="1">
    <location>
        <position position="113"/>
    </location>
    <ligand>
        <name>S-adenosyl-L-methionine</name>
        <dbReference type="ChEBI" id="CHEBI:59789"/>
    </ligand>
</feature>
<feature type="binding site" evidence="1">
    <location>
        <position position="142"/>
    </location>
    <ligand>
        <name>S-adenosyl-L-methionine</name>
        <dbReference type="ChEBI" id="CHEBI:59789"/>
    </ligand>
</feature>
<name>ANM62_ORYSI</name>
<protein>
    <recommendedName>
        <fullName>Probable protein arginine N-methyltransferase 6.2</fullName>
        <ecNumber>2.1.1.-</ecNumber>
    </recommendedName>
</protein>
<keyword id="KW-0489">Methyltransferase</keyword>
<keyword id="KW-1185">Reference proteome</keyword>
<keyword id="KW-0949">S-adenosyl-L-methionine</keyword>
<keyword id="KW-0808">Transferase</keyword>
<proteinExistence type="inferred from homology"/>
<sequence length="395" mass="43978">MFAGGADGGNGHLPRPRRARRGGGGGGGMGSPPLGPPPPPCTDYDMAYFKAYSHIGVHEEMLKDHVRTNTYRNAIMHHQDLISGKVVLDVGCGTGVLSIFCAFAGAARVYAVDASDIALQAMEIVRENELSDKVIVLHGRIEDVEIEEKVDVIISEWMGYMLLYESMLGSVIFARDKWLKPGGLILPSHASLYLAPITNSHRYQDSVYFWQDVYGIKMSSMMPLAKQCAFMEPSVETISGENVLTWPSVVAQVDCYTIQAPELETITATFNYTSMLQAPLHGFAFWFDVEFNGPVRQRSKKQANQCLDGNTQDASPSNKKKKADAPIVLSTAPEDAPTHWQQTLLYLFEPIELKKDQNIEGSVTISQSQQHARFLNICLKYFTRDQWYVKESVMK</sequence>